<proteinExistence type="evidence at protein level"/>
<feature type="chain" id="PRO_0000088761" description="Citrate/malate-proton symporter">
    <location>
        <begin position="1"/>
        <end position="450"/>
    </location>
</feature>
<feature type="topological domain" description="Cytoplasmic" evidence="6">
    <location>
        <begin position="1"/>
        <end position="32"/>
    </location>
</feature>
<feature type="transmembrane region" description="Helical" evidence="1">
    <location>
        <begin position="33"/>
        <end position="53"/>
    </location>
</feature>
<feature type="topological domain" description="Extracellular" evidence="6">
    <location>
        <begin position="54"/>
        <end position="64"/>
    </location>
</feature>
<feature type="transmembrane region" description="Helical" evidence="1">
    <location>
        <begin position="65"/>
        <end position="85"/>
    </location>
</feature>
<feature type="topological domain" description="Cytoplasmic" evidence="6">
    <location>
        <begin position="86"/>
        <end position="87"/>
    </location>
</feature>
<feature type="transmembrane region" description="Helical" evidence="1">
    <location>
        <begin position="88"/>
        <end position="108"/>
    </location>
</feature>
<feature type="topological domain" description="Extracellular" evidence="6">
    <location>
        <begin position="109"/>
        <end position="118"/>
    </location>
</feature>
<feature type="transmembrane region" description="Helical" evidence="1">
    <location>
        <begin position="119"/>
        <end position="139"/>
    </location>
</feature>
<feature type="topological domain" description="Cytoplasmic" evidence="7">
    <location>
        <begin position="140"/>
        <end position="152"/>
    </location>
</feature>
<feature type="transmembrane region" description="Helical" evidence="1">
    <location>
        <begin position="153"/>
        <end position="173"/>
    </location>
</feature>
<feature type="topological domain" description="Extracellular" evidence="6">
    <location>
        <begin position="174"/>
        <end position="217"/>
    </location>
</feature>
<feature type="transmembrane region" description="Helical" evidence="1">
    <location>
        <begin position="218"/>
        <end position="238"/>
    </location>
</feature>
<feature type="topological domain" description="Cytoplasmic" evidence="6">
    <location>
        <begin position="239"/>
        <end position="273"/>
    </location>
</feature>
<feature type="transmembrane region" description="Helical" evidence="1">
    <location>
        <begin position="274"/>
        <end position="294"/>
    </location>
</feature>
<feature type="topological domain" description="Extracellular" evidence="6">
    <location>
        <position position="295"/>
    </location>
</feature>
<feature type="transmembrane region" description="Helical" evidence="1">
    <location>
        <begin position="296"/>
        <end position="316"/>
    </location>
</feature>
<feature type="topological domain" description="Cytoplasmic" evidence="6">
    <location>
        <begin position="317"/>
        <end position="335"/>
    </location>
</feature>
<feature type="transmembrane region" description="Helical" evidence="1">
    <location>
        <begin position="336"/>
        <end position="356"/>
    </location>
</feature>
<feature type="topological domain" description="Extracellular" evidence="6">
    <location>
        <begin position="357"/>
        <end position="364"/>
    </location>
</feature>
<feature type="transmembrane region" description="Helical" evidence="1">
    <location>
        <begin position="365"/>
        <end position="385"/>
    </location>
</feature>
<feature type="topological domain" description="Cytoplasmic" evidence="7">
    <location>
        <begin position="386"/>
        <end position="428"/>
    </location>
</feature>
<feature type="transmembrane region" description="Helical" evidence="1">
    <location>
        <begin position="429"/>
        <end position="446"/>
    </location>
</feature>
<feature type="topological domain" description="Extracellular" evidence="6">
    <location>
        <begin position="447"/>
        <end position="450"/>
    </location>
</feature>
<feature type="region of interest" description="Disordered" evidence="2">
    <location>
        <begin position="249"/>
        <end position="268"/>
    </location>
</feature>
<feature type="mutagenesis site" description="No change in citrate uptake activity." evidence="4">
    <original>R</original>
    <variation>C</variation>
    <location>
        <position position="143"/>
    </location>
</feature>
<feature type="mutagenesis site" description="Retains 75% of specific activity for citrate transport. Retains 52% of specific activity for citrate transport; when associated with S-402." evidence="4">
    <original>C</original>
    <variation>S</variation>
    <location>
        <position position="231"/>
    </location>
</feature>
<feature type="mutagenesis site" description="Retains 55% of specific activity for citrate transport. Retains 52% of specific activity for citrate transport; when associated with S-231." evidence="4">
    <original>C</original>
    <variation>S</variation>
    <location>
        <position position="402"/>
    </location>
</feature>
<feature type="mutagenesis site" description="No change in citrate uptake activity." evidence="4">
    <original>R</original>
    <variation>C</variation>
    <location>
        <position position="420"/>
    </location>
</feature>
<feature type="mutagenesis site" description="No change in citrate uptake activity." evidence="4">
    <original>Q</original>
    <variation>C</variation>
    <location>
        <position position="428"/>
    </location>
</feature>
<feature type="mutagenesis site" description="Loss of citrate uptake activity." evidence="4">
    <original>R</original>
    <variation>C</variation>
    <location>
        <position position="432"/>
    </location>
</feature>
<feature type="mutagenesis site" description="Retains 5% of citrate uptake activity. 30-fold increase in KM for citrate, but Vmax is not significantly altered." evidence="4">
    <original>R</original>
    <variation>K</variation>
    <location>
        <position position="432"/>
    </location>
</feature>
<evidence type="ECO:0000255" key="1"/>
<evidence type="ECO:0000256" key="2">
    <source>
        <dbReference type="SAM" id="MobiDB-lite"/>
    </source>
</evidence>
<evidence type="ECO:0000269" key="3">
    <source>
    </source>
</evidence>
<evidence type="ECO:0000269" key="4">
    <source>
    </source>
</evidence>
<evidence type="ECO:0000303" key="5">
    <source>
    </source>
</evidence>
<evidence type="ECO:0000305" key="6"/>
<evidence type="ECO:0000305" key="7">
    <source>
    </source>
</evidence>
<reference key="1">
    <citation type="journal article" date="1996" name="Microbiology">
        <title>Sequencing of a 65 kb region of the Bacillus subtilis genome containing the lic and cel loci, and creation of a 177 kb contig covering the gnt-sacXY region.</title>
        <authorList>
            <person name="Yoshida K."/>
            <person name="Shindo K."/>
            <person name="Sano H."/>
            <person name="Seki S."/>
            <person name="Fujimura M."/>
            <person name="Yanai N."/>
            <person name="Miwa Y."/>
            <person name="Fujita Y."/>
        </authorList>
    </citation>
    <scope>NUCLEOTIDE SEQUENCE [GENOMIC DNA]</scope>
    <source>
        <strain>168 / BGSC1A1</strain>
    </source>
</reference>
<reference key="2">
    <citation type="journal article" date="1997" name="Nature">
        <title>The complete genome sequence of the Gram-positive bacterium Bacillus subtilis.</title>
        <authorList>
            <person name="Kunst F."/>
            <person name="Ogasawara N."/>
            <person name="Moszer I."/>
            <person name="Albertini A.M."/>
            <person name="Alloni G."/>
            <person name="Azevedo V."/>
            <person name="Bertero M.G."/>
            <person name="Bessieres P."/>
            <person name="Bolotin A."/>
            <person name="Borchert S."/>
            <person name="Borriss R."/>
            <person name="Boursier L."/>
            <person name="Brans A."/>
            <person name="Braun M."/>
            <person name="Brignell S.C."/>
            <person name="Bron S."/>
            <person name="Brouillet S."/>
            <person name="Bruschi C.V."/>
            <person name="Caldwell B."/>
            <person name="Capuano V."/>
            <person name="Carter N.M."/>
            <person name="Choi S.-K."/>
            <person name="Codani J.-J."/>
            <person name="Connerton I.F."/>
            <person name="Cummings N.J."/>
            <person name="Daniel R.A."/>
            <person name="Denizot F."/>
            <person name="Devine K.M."/>
            <person name="Duesterhoeft A."/>
            <person name="Ehrlich S.D."/>
            <person name="Emmerson P.T."/>
            <person name="Entian K.-D."/>
            <person name="Errington J."/>
            <person name="Fabret C."/>
            <person name="Ferrari E."/>
            <person name="Foulger D."/>
            <person name="Fritz C."/>
            <person name="Fujita M."/>
            <person name="Fujita Y."/>
            <person name="Fuma S."/>
            <person name="Galizzi A."/>
            <person name="Galleron N."/>
            <person name="Ghim S.-Y."/>
            <person name="Glaser P."/>
            <person name="Goffeau A."/>
            <person name="Golightly E.J."/>
            <person name="Grandi G."/>
            <person name="Guiseppi G."/>
            <person name="Guy B.J."/>
            <person name="Haga K."/>
            <person name="Haiech J."/>
            <person name="Harwood C.R."/>
            <person name="Henaut A."/>
            <person name="Hilbert H."/>
            <person name="Holsappel S."/>
            <person name="Hosono S."/>
            <person name="Hullo M.-F."/>
            <person name="Itaya M."/>
            <person name="Jones L.-M."/>
            <person name="Joris B."/>
            <person name="Karamata D."/>
            <person name="Kasahara Y."/>
            <person name="Klaerr-Blanchard M."/>
            <person name="Klein C."/>
            <person name="Kobayashi Y."/>
            <person name="Koetter P."/>
            <person name="Koningstein G."/>
            <person name="Krogh S."/>
            <person name="Kumano M."/>
            <person name="Kurita K."/>
            <person name="Lapidus A."/>
            <person name="Lardinois S."/>
            <person name="Lauber J."/>
            <person name="Lazarevic V."/>
            <person name="Lee S.-M."/>
            <person name="Levine A."/>
            <person name="Liu H."/>
            <person name="Masuda S."/>
            <person name="Mauel C."/>
            <person name="Medigue C."/>
            <person name="Medina N."/>
            <person name="Mellado R.P."/>
            <person name="Mizuno M."/>
            <person name="Moestl D."/>
            <person name="Nakai S."/>
            <person name="Noback M."/>
            <person name="Noone D."/>
            <person name="O'Reilly M."/>
            <person name="Ogawa K."/>
            <person name="Ogiwara A."/>
            <person name="Oudega B."/>
            <person name="Park S.-H."/>
            <person name="Parro V."/>
            <person name="Pohl T.M."/>
            <person name="Portetelle D."/>
            <person name="Porwollik S."/>
            <person name="Prescott A.M."/>
            <person name="Presecan E."/>
            <person name="Pujic P."/>
            <person name="Purnelle B."/>
            <person name="Rapoport G."/>
            <person name="Rey M."/>
            <person name="Reynolds S."/>
            <person name="Rieger M."/>
            <person name="Rivolta C."/>
            <person name="Rocha E."/>
            <person name="Roche B."/>
            <person name="Rose M."/>
            <person name="Sadaie Y."/>
            <person name="Sato T."/>
            <person name="Scanlan E."/>
            <person name="Schleich S."/>
            <person name="Schroeter R."/>
            <person name="Scoffone F."/>
            <person name="Sekiguchi J."/>
            <person name="Sekowska A."/>
            <person name="Seror S.J."/>
            <person name="Serror P."/>
            <person name="Shin B.-S."/>
            <person name="Soldo B."/>
            <person name="Sorokin A."/>
            <person name="Tacconi E."/>
            <person name="Takagi T."/>
            <person name="Takahashi H."/>
            <person name="Takemaru K."/>
            <person name="Takeuchi M."/>
            <person name="Tamakoshi A."/>
            <person name="Tanaka T."/>
            <person name="Terpstra P."/>
            <person name="Tognoni A."/>
            <person name="Tosato V."/>
            <person name="Uchiyama S."/>
            <person name="Vandenbol M."/>
            <person name="Vannier F."/>
            <person name="Vassarotti A."/>
            <person name="Viari A."/>
            <person name="Wambutt R."/>
            <person name="Wedler E."/>
            <person name="Wedler H."/>
            <person name="Weitzenegger T."/>
            <person name="Winters P."/>
            <person name="Wipat A."/>
            <person name="Yamamoto H."/>
            <person name="Yamane K."/>
            <person name="Yasumoto K."/>
            <person name="Yata K."/>
            <person name="Yoshida K."/>
            <person name="Yoshikawa H.-F."/>
            <person name="Zumstein E."/>
            <person name="Yoshikawa H."/>
            <person name="Danchin A."/>
        </authorList>
    </citation>
    <scope>NUCLEOTIDE SEQUENCE [LARGE SCALE GENOMIC DNA]</scope>
    <source>
        <strain>168</strain>
    </source>
</reference>
<reference key="3">
    <citation type="journal article" date="2001" name="J. Bacteriol.">
        <title>Bacillus subtilis YxkJ is a secondary transporter of the 2-hydroxycarboxylate transporter family that transports L-malate and citrate.</title>
        <authorList>
            <person name="Krom B.P."/>
            <person name="Aardema R."/>
            <person name="Lolkema J.S."/>
        </authorList>
    </citation>
    <scope>FUNCTION</scope>
    <scope>TRANSPORTER ACTIVITY</scope>
    <scope>ACTIVITY REGULATION</scope>
    <scope>BIOPHYSICOCHEMICAL PROPERTIES</scope>
    <source>
        <strain>168</strain>
    </source>
</reference>
<reference key="4">
    <citation type="journal article" date="2003" name="Biochemistry">
        <title>Conserved residues R420 and Q428 in a cytoplasmic loop of the citrate/malate transporter CimH of Bacillus subtilis are accessible from the external face of the membrane.</title>
        <authorList>
            <person name="Krom B.P."/>
            <person name="Lolkema J.S."/>
        </authorList>
    </citation>
    <scope>BIOPHYSICOCHEMICAL PROPERTIES</scope>
    <scope>SUBCELLULAR LOCATION</scope>
    <scope>MUTAGENESIS OF ARG-143; CYS-231; CYS-402; ARG-420; GLN-428 AND ARG-432</scope>
</reference>
<sequence>MGELQTHMQLQTDTIHEGVRKENWFAKAMNIKVGIIPLPVYALLFILITVFVMHHDVKSDILTSIAVMAFFGFTFAQIGKSIPIVRSIGGPAILATFIPSAVVYYHLLPNDIVKSTTEFTENSNFLYLFIAGIVVGSILGMKRETLVKAFMKIFIPLIVGSVTAAIVGLAVGTLLGLGFQHTLLYIVIPIMAGGVGEGAIPLSIGYSDIMPISQGEAFALVLPSIMLGSLCAIILAGLLNRIGKKKPEWTGNGKVDRSEEESPALEESQSGQQMFNLSLFASGGILAVSLYLVGMLAHDFFGFPAPVAMLLLAVLIKLFRLVPASIENGAFGVSRFFSTAVTYPLLFAIGVSMTPWDKLVAAFNLSNIITILSVVVTMMAVGFFTGKWLNMYPIETAIINACHSGQGGTGDVAILSAAERLELMPFAQVSTRIGGAITVSLTLLLLHQFY</sequence>
<comment type="function">
    <text evidence="3">Proton motive force-driven secondary transporter that catalyzes the uptake of both citrate and malate (PubMed:11566984). Is an electroneutral proton-solute symporter: the number of protons transported is equal to the valence of the transported anions (PubMed:11566984). Translocates the free citrate and malate anions (PubMed:11566984). Citramalate binds to the transporter, but it is not translocated (PubMed:11566984). Is strictly stereoselective, recognizing only the (S)-enantiomers of malate and citramalate (PubMed:11566984).</text>
</comment>
<comment type="catalytic activity">
    <reaction evidence="3">
        <text>citrate(in) + 3 H(+)(in) = citrate(out) + 3 H(+)(out)</text>
        <dbReference type="Rhea" id="RHEA:79307"/>
        <dbReference type="ChEBI" id="CHEBI:15378"/>
        <dbReference type="ChEBI" id="CHEBI:16947"/>
    </reaction>
    <physiologicalReaction direction="right-to-left" evidence="3">
        <dbReference type="Rhea" id="RHEA:79309"/>
    </physiologicalReaction>
</comment>
<comment type="catalytic activity">
    <reaction evidence="3">
        <text>(S)-malate(in) + 2 H(+)(in) = (S)-malate(out) + 2 H(+)(out)</text>
        <dbReference type="Rhea" id="RHEA:29339"/>
        <dbReference type="ChEBI" id="CHEBI:15378"/>
        <dbReference type="ChEBI" id="CHEBI:15589"/>
    </reaction>
    <physiologicalReaction direction="right-to-left" evidence="3">
        <dbReference type="Rhea" id="RHEA:29341"/>
    </physiologicalReaction>
</comment>
<comment type="activity regulation">
    <text evidence="3">The uptake activity is inhibited by divalent metal ions such as Ca(2+), Mg(2+) and Ni(2+).</text>
</comment>
<comment type="biophysicochemical properties">
    <kinetics>
        <KM evidence="3">12 uM for citrate</KM>
        <KM evidence="4">10 uM for citrate</KM>
        <Vmax evidence="3 4">37.0 nmol/min/mg enzyme with citrate as substrate</Vmax>
        <Vmax evidence="3">167.0 nmol/min/mg enzyme with S-malate as substrate</Vmax>
    </kinetics>
</comment>
<comment type="subcellular location">
    <subcellularLocation>
        <location evidence="3">Cell membrane</location>
        <topology evidence="1">Multi-pass membrane protein</topology>
    </subcellularLocation>
</comment>
<comment type="similarity">
    <text evidence="6">Belongs to the 2-hydroxycarboxylate transporter (2-HCT) (TC 2.A.24) family.</text>
</comment>
<protein>
    <recommendedName>
        <fullName evidence="6">Citrate/malate-proton symporter</fullName>
    </recommendedName>
    <alternativeName>
        <fullName evidence="5">CimHbs</fullName>
    </alternativeName>
    <alternativeName>
        <fullName evidence="6">Citrate/malate transporter</fullName>
    </alternativeName>
</protein>
<accession>P94363</accession>
<name>CIMH_BACSU</name>
<organism>
    <name type="scientific">Bacillus subtilis (strain 168)</name>
    <dbReference type="NCBI Taxonomy" id="224308"/>
    <lineage>
        <taxon>Bacteria</taxon>
        <taxon>Bacillati</taxon>
        <taxon>Bacillota</taxon>
        <taxon>Bacilli</taxon>
        <taxon>Bacillales</taxon>
        <taxon>Bacillaceae</taxon>
        <taxon>Bacillus</taxon>
    </lineage>
</organism>
<keyword id="KW-1003">Cell membrane</keyword>
<keyword id="KW-0163">Citrate utilization</keyword>
<keyword id="KW-0472">Membrane</keyword>
<keyword id="KW-1185">Reference proteome</keyword>
<keyword id="KW-0769">Symport</keyword>
<keyword id="KW-0812">Transmembrane</keyword>
<keyword id="KW-1133">Transmembrane helix</keyword>
<keyword id="KW-0813">Transport</keyword>
<gene>
    <name evidence="5" type="primary">cimH</name>
    <name type="synonym">yxkJ</name>
    <name type="ordered locus">BSU38770</name>
</gene>
<dbReference type="EMBL" id="D83026">
    <property type="protein sequence ID" value="BAA11726.1"/>
    <property type="molecule type" value="Genomic_DNA"/>
</dbReference>
<dbReference type="EMBL" id="AL009126">
    <property type="protein sequence ID" value="CAB15903.1"/>
    <property type="molecule type" value="Genomic_DNA"/>
</dbReference>
<dbReference type="PIR" id="C70081">
    <property type="entry name" value="C70081"/>
</dbReference>
<dbReference type="RefSeq" id="NP_391756.1">
    <property type="nucleotide sequence ID" value="NC_000964.3"/>
</dbReference>
<dbReference type="RefSeq" id="WP_003227271.1">
    <property type="nucleotide sequence ID" value="NZ_OZ025638.1"/>
</dbReference>
<dbReference type="SMR" id="P94363"/>
<dbReference type="FunCoup" id="P94363">
    <property type="interactions" value="6"/>
</dbReference>
<dbReference type="STRING" id="224308.BSU38770"/>
<dbReference type="TCDB" id="2.A.24.2.4">
    <property type="family name" value="the 2-hydroxycarboxylate transporter (2-hct) family"/>
</dbReference>
<dbReference type="PaxDb" id="224308-BSU38770"/>
<dbReference type="EnsemblBacteria" id="CAB15903">
    <property type="protein sequence ID" value="CAB15903"/>
    <property type="gene ID" value="BSU_38770"/>
</dbReference>
<dbReference type="GeneID" id="937407"/>
<dbReference type="KEGG" id="bsu:BSU38770"/>
<dbReference type="PATRIC" id="fig|224308.179.peg.4196"/>
<dbReference type="eggNOG" id="COG3493">
    <property type="taxonomic scope" value="Bacteria"/>
</dbReference>
<dbReference type="InParanoid" id="P94363"/>
<dbReference type="OrthoDB" id="8584824at2"/>
<dbReference type="PhylomeDB" id="P94363"/>
<dbReference type="BioCyc" id="BSUB:BSU38770-MONOMER"/>
<dbReference type="Proteomes" id="UP000001570">
    <property type="component" value="Chromosome"/>
</dbReference>
<dbReference type="GO" id="GO:0005886">
    <property type="term" value="C:plasma membrane"/>
    <property type="evidence" value="ECO:0007669"/>
    <property type="project" value="UniProtKB-SubCell"/>
</dbReference>
<dbReference type="GO" id="GO:0015531">
    <property type="term" value="F:citrate:proton symporter activity"/>
    <property type="evidence" value="ECO:0000314"/>
    <property type="project" value="CACAO"/>
</dbReference>
<dbReference type="GO" id="GO:0006101">
    <property type="term" value="P:citrate metabolic process"/>
    <property type="evidence" value="ECO:0007669"/>
    <property type="project" value="UniProtKB-KW"/>
</dbReference>
<dbReference type="InterPro" id="IPR018025">
    <property type="entry name" value="2-OHcarbox_trans_Prot/Firm"/>
</dbReference>
<dbReference type="InterPro" id="IPR004679">
    <property type="entry name" value="2-OHcarboxylate_transport"/>
</dbReference>
<dbReference type="NCBIfam" id="TIGR00783">
    <property type="entry name" value="ccs"/>
    <property type="match status" value="1"/>
</dbReference>
<dbReference type="PANTHER" id="PTHR40033:SF1">
    <property type="entry name" value="CITRATE-SODIUM SYMPORTER"/>
    <property type="match status" value="1"/>
</dbReference>
<dbReference type="PANTHER" id="PTHR40033">
    <property type="entry name" value="NA(+)-MALATE SYMPORTER"/>
    <property type="match status" value="1"/>
</dbReference>
<dbReference type="Pfam" id="PF03390">
    <property type="entry name" value="2HCT"/>
    <property type="match status" value="1"/>
</dbReference>
<dbReference type="PIRSF" id="PIRSF005348">
    <property type="entry name" value="YxkH"/>
    <property type="match status" value="1"/>
</dbReference>